<feature type="chain" id="PRO_0000153671" description="Prefoldin subunit alpha">
    <location>
        <begin position="1"/>
        <end position="154"/>
    </location>
</feature>
<feature type="region of interest" description="Disordered" evidence="2">
    <location>
        <begin position="119"/>
        <end position="154"/>
    </location>
</feature>
<feature type="compositionally biased region" description="Low complexity" evidence="2">
    <location>
        <begin position="132"/>
        <end position="154"/>
    </location>
</feature>
<organism>
    <name type="scientific">Haloarcula marismortui (strain ATCC 43049 / DSM 3752 / JCM 8966 / VKM B-1809)</name>
    <name type="common">Halobacterium marismortui</name>
    <dbReference type="NCBI Taxonomy" id="272569"/>
    <lineage>
        <taxon>Archaea</taxon>
        <taxon>Methanobacteriati</taxon>
        <taxon>Methanobacteriota</taxon>
        <taxon>Stenosarchaea group</taxon>
        <taxon>Halobacteria</taxon>
        <taxon>Halobacteriales</taxon>
        <taxon>Haloarculaceae</taxon>
        <taxon>Haloarcula</taxon>
    </lineage>
</organism>
<reference key="1">
    <citation type="journal article" date="2004" name="Genome Res.">
        <title>Genome sequence of Haloarcula marismortui: a halophilic archaeon from the Dead Sea.</title>
        <authorList>
            <person name="Baliga N.S."/>
            <person name="Bonneau R."/>
            <person name="Facciotti M.T."/>
            <person name="Pan M."/>
            <person name="Glusman G."/>
            <person name="Deutsch E.W."/>
            <person name="Shannon P."/>
            <person name="Chiu Y."/>
            <person name="Weng R.S."/>
            <person name="Gan R.R."/>
            <person name="Hung P."/>
            <person name="Date S.V."/>
            <person name="Marcotte E."/>
            <person name="Hood L."/>
            <person name="Ng W.V."/>
        </authorList>
    </citation>
    <scope>NUCLEOTIDE SEQUENCE [LARGE SCALE GENOMIC DNA]</scope>
    <source>
        <strain>ATCC 43049 / DSM 3752 / JCM 8966 / VKM B-1809</strain>
    </source>
</reference>
<accession>Q5UY26</accession>
<keyword id="KW-0143">Chaperone</keyword>
<keyword id="KW-0963">Cytoplasm</keyword>
<keyword id="KW-1185">Reference proteome</keyword>
<comment type="function">
    <text evidence="1">Molecular chaperone capable of stabilizing a range of proteins. Seems to fulfill an ATP-independent, HSP70-like function in archaeal de novo protein folding.</text>
</comment>
<comment type="subunit">
    <text evidence="1">Heterohexamer of two alpha and four beta subunits.</text>
</comment>
<comment type="subcellular location">
    <subcellularLocation>
        <location evidence="1">Cytoplasm</location>
    </subcellularLocation>
</comment>
<comment type="similarity">
    <text evidence="3">Belongs to the prefoldin subunit alpha family.</text>
</comment>
<dbReference type="EMBL" id="AY596297">
    <property type="protein sequence ID" value="AAV47827.1"/>
    <property type="molecule type" value="Genomic_DNA"/>
</dbReference>
<dbReference type="SMR" id="Q5UY26"/>
<dbReference type="STRING" id="272569.rrnAC3116"/>
<dbReference type="PaxDb" id="272569-rrnAC3116"/>
<dbReference type="EnsemblBacteria" id="AAV47827">
    <property type="protein sequence ID" value="AAV47827"/>
    <property type="gene ID" value="rrnAC3116"/>
</dbReference>
<dbReference type="KEGG" id="hma:rrnAC3116"/>
<dbReference type="PATRIC" id="fig|272569.17.peg.3660"/>
<dbReference type="eggNOG" id="arCOG01341">
    <property type="taxonomic scope" value="Archaea"/>
</dbReference>
<dbReference type="HOGENOM" id="CLU_091867_1_3_2"/>
<dbReference type="Proteomes" id="UP000001169">
    <property type="component" value="Chromosome I"/>
</dbReference>
<dbReference type="GO" id="GO:0005737">
    <property type="term" value="C:cytoplasm"/>
    <property type="evidence" value="ECO:0007669"/>
    <property type="project" value="UniProtKB-SubCell"/>
</dbReference>
<dbReference type="GO" id="GO:0016272">
    <property type="term" value="C:prefoldin complex"/>
    <property type="evidence" value="ECO:0007669"/>
    <property type="project" value="UniProtKB-UniRule"/>
</dbReference>
<dbReference type="GO" id="GO:0051082">
    <property type="term" value="F:unfolded protein binding"/>
    <property type="evidence" value="ECO:0007669"/>
    <property type="project" value="UniProtKB-UniRule"/>
</dbReference>
<dbReference type="GO" id="GO:0006457">
    <property type="term" value="P:protein folding"/>
    <property type="evidence" value="ECO:0007669"/>
    <property type="project" value="UniProtKB-UniRule"/>
</dbReference>
<dbReference type="CDD" id="cd00584">
    <property type="entry name" value="Prefoldin_alpha"/>
    <property type="match status" value="1"/>
</dbReference>
<dbReference type="Gene3D" id="1.10.287.370">
    <property type="match status" value="1"/>
</dbReference>
<dbReference type="HAMAP" id="MF_00308">
    <property type="entry name" value="PfdA"/>
    <property type="match status" value="1"/>
</dbReference>
<dbReference type="InterPro" id="IPR011599">
    <property type="entry name" value="PFD_alpha_archaea"/>
</dbReference>
<dbReference type="InterPro" id="IPR009053">
    <property type="entry name" value="Prefoldin"/>
</dbReference>
<dbReference type="InterPro" id="IPR004127">
    <property type="entry name" value="Prefoldin_subunit_alpha"/>
</dbReference>
<dbReference type="NCBIfam" id="TIGR00293">
    <property type="entry name" value="prefoldin subunit alpha"/>
    <property type="match status" value="1"/>
</dbReference>
<dbReference type="PANTHER" id="PTHR12674">
    <property type="entry name" value="PREFOLDIN SUBUNIT 5"/>
    <property type="match status" value="1"/>
</dbReference>
<dbReference type="PANTHER" id="PTHR12674:SF2">
    <property type="entry name" value="PREFOLDIN SUBUNIT 5"/>
    <property type="match status" value="1"/>
</dbReference>
<dbReference type="Pfam" id="PF02996">
    <property type="entry name" value="Prefoldin"/>
    <property type="match status" value="1"/>
</dbReference>
<dbReference type="SUPFAM" id="SSF46579">
    <property type="entry name" value="Prefoldin"/>
    <property type="match status" value="1"/>
</dbReference>
<name>PFDA_HALMA</name>
<evidence type="ECO:0000255" key="1">
    <source>
        <dbReference type="HAMAP-Rule" id="MF_00308"/>
    </source>
</evidence>
<evidence type="ECO:0000256" key="2">
    <source>
        <dbReference type="SAM" id="MobiDB-lite"/>
    </source>
</evidence>
<evidence type="ECO:0000305" key="3"/>
<proteinExistence type="inferred from homology"/>
<gene>
    <name evidence="1" type="primary">pfdA</name>
    <name type="ordered locus">rrnAC3116</name>
</gene>
<protein>
    <recommendedName>
        <fullName evidence="1">Prefoldin subunit alpha</fullName>
    </recommendedName>
    <alternativeName>
        <fullName evidence="1">GimC subunit alpha</fullName>
    </alternativeName>
</protein>
<sequence length="154" mass="17038">MMGGGGGGGGGGQMQQVAQEIEQMEQEVEAIDEEIERLREKQTDIDEAIEAIETLDSGSTVQVPLGGDAYIRATIEDIDEVVVSLGGGYSAEREQDGAVSTLETKKETLDDHISDLQEEKAEVETEMEELEQQAQQMQQQQMQQMMQQQEQEDE</sequence>